<name>RLMM_PSE14</name>
<protein>
    <recommendedName>
        <fullName evidence="1">Ribosomal RNA large subunit methyltransferase M</fullName>
        <ecNumber evidence="1">2.1.1.186</ecNumber>
    </recommendedName>
    <alternativeName>
        <fullName evidence="1">23S rRNA (cytidine2498-2'-O)-methyltransferase</fullName>
    </alternativeName>
    <alternativeName>
        <fullName evidence="1">23S rRNA 2'-O-ribose methyltransferase RlmM</fullName>
    </alternativeName>
</protein>
<dbReference type="EC" id="2.1.1.186" evidence="1"/>
<dbReference type="EMBL" id="CP000058">
    <property type="protein sequence ID" value="AAZ35091.1"/>
    <property type="molecule type" value="Genomic_DNA"/>
</dbReference>
<dbReference type="RefSeq" id="WP_011169064.1">
    <property type="nucleotide sequence ID" value="NC_005773.3"/>
</dbReference>
<dbReference type="SMR" id="Q48GK0"/>
<dbReference type="KEGG" id="psp:PSPPH_3325"/>
<dbReference type="eggNOG" id="COG2933">
    <property type="taxonomic scope" value="Bacteria"/>
</dbReference>
<dbReference type="HOGENOM" id="CLU_043780_0_0_6"/>
<dbReference type="Proteomes" id="UP000000551">
    <property type="component" value="Chromosome"/>
</dbReference>
<dbReference type="GO" id="GO:0005737">
    <property type="term" value="C:cytoplasm"/>
    <property type="evidence" value="ECO:0007669"/>
    <property type="project" value="UniProtKB-SubCell"/>
</dbReference>
<dbReference type="GO" id="GO:0008757">
    <property type="term" value="F:S-adenosylmethionine-dependent methyltransferase activity"/>
    <property type="evidence" value="ECO:0007669"/>
    <property type="project" value="UniProtKB-UniRule"/>
</dbReference>
<dbReference type="GO" id="GO:0032259">
    <property type="term" value="P:methylation"/>
    <property type="evidence" value="ECO:0007669"/>
    <property type="project" value="UniProtKB-KW"/>
</dbReference>
<dbReference type="GO" id="GO:0006364">
    <property type="term" value="P:rRNA processing"/>
    <property type="evidence" value="ECO:0007669"/>
    <property type="project" value="UniProtKB-UniRule"/>
</dbReference>
<dbReference type="Gene3D" id="3.30.2300.20">
    <property type="match status" value="1"/>
</dbReference>
<dbReference type="Gene3D" id="3.30.70.2810">
    <property type="match status" value="1"/>
</dbReference>
<dbReference type="Gene3D" id="3.40.50.150">
    <property type="entry name" value="Vaccinia Virus protein VP39"/>
    <property type="match status" value="1"/>
</dbReference>
<dbReference type="HAMAP" id="MF_01551">
    <property type="entry name" value="23SrRNA_methyltr_M"/>
    <property type="match status" value="1"/>
</dbReference>
<dbReference type="InterPro" id="IPR040739">
    <property type="entry name" value="RlmM_FDX"/>
</dbReference>
<dbReference type="InterPro" id="IPR048646">
    <property type="entry name" value="RlmM_THUMP-like"/>
</dbReference>
<dbReference type="InterPro" id="IPR002877">
    <property type="entry name" value="RNA_MeTrfase_FtsJ_dom"/>
</dbReference>
<dbReference type="InterPro" id="IPR011224">
    <property type="entry name" value="rRNA_MeTrfase_M"/>
</dbReference>
<dbReference type="InterPro" id="IPR029063">
    <property type="entry name" value="SAM-dependent_MTases_sf"/>
</dbReference>
<dbReference type="NCBIfam" id="NF008734">
    <property type="entry name" value="PRK11760.1"/>
    <property type="match status" value="1"/>
</dbReference>
<dbReference type="PANTHER" id="PTHR37524">
    <property type="entry name" value="RIBOSOMAL RNA LARGE SUBUNIT METHYLTRANSFERASE M"/>
    <property type="match status" value="1"/>
</dbReference>
<dbReference type="PANTHER" id="PTHR37524:SF2">
    <property type="entry name" value="RIBOSOMAL RNA METHYLTRANSFERASE FTSJ DOMAIN-CONTAINING PROTEIN"/>
    <property type="match status" value="1"/>
</dbReference>
<dbReference type="Pfam" id="PF01728">
    <property type="entry name" value="FtsJ"/>
    <property type="match status" value="1"/>
</dbReference>
<dbReference type="Pfam" id="PF18125">
    <property type="entry name" value="RlmM_FDX"/>
    <property type="match status" value="1"/>
</dbReference>
<dbReference type="Pfam" id="PF21239">
    <property type="entry name" value="RLMM_N"/>
    <property type="match status" value="1"/>
</dbReference>
<dbReference type="PIRSF" id="PIRSF028774">
    <property type="entry name" value="UCP028774"/>
    <property type="match status" value="1"/>
</dbReference>
<dbReference type="SUPFAM" id="SSF53335">
    <property type="entry name" value="S-adenosyl-L-methionine-dependent methyltransferases"/>
    <property type="match status" value="1"/>
</dbReference>
<accession>Q48GK0</accession>
<keyword id="KW-0963">Cytoplasm</keyword>
<keyword id="KW-0489">Methyltransferase</keyword>
<keyword id="KW-0698">rRNA processing</keyword>
<keyword id="KW-0949">S-adenosyl-L-methionine</keyword>
<keyword id="KW-0808">Transferase</keyword>
<gene>
    <name evidence="1" type="primary">rlmM</name>
    <name type="ordered locus">PSPPH_3325</name>
</gene>
<sequence>MNTLFMHCRPGFEGEVCSEISDHAACLDVAGYAKARPDTACAEFICTEADGAERLMNGQRFDALIFPRQWARGMFLELPETDRISVILAQLSAFPACGSLWLEVVDTNDGKELSNFCKKFEAPLRKALMQAGKLVDDPRKPRLLLTFKSGREVFLGLADADNSAMWPMGIPRLKFPREAPSRSTLKLEEAWHHFIPRDQWDERLSGDMTGVDLGAAPGGWTYQLVRRGMLVTAIDNGPMAESLMDTGLVQHLMADGFTYKPRHPVDWMVCDIVEKPARNAALLETWLGEGLCREAVVNLKLPMKQRYAEVRRLLDRIEEGFQARGVRVSIGCKQLYHDREEVTCHLRRLDVAKAATK</sequence>
<feature type="chain" id="PRO_0000070419" description="Ribosomal RNA large subunit methyltransferase M">
    <location>
        <begin position="1"/>
        <end position="357"/>
    </location>
</feature>
<feature type="active site" description="Proton acceptor" evidence="1">
    <location>
        <position position="300"/>
    </location>
</feature>
<feature type="binding site" evidence="1">
    <location>
        <position position="183"/>
    </location>
    <ligand>
        <name>S-adenosyl-L-methionine</name>
        <dbReference type="ChEBI" id="CHEBI:59789"/>
    </ligand>
</feature>
<feature type="binding site" evidence="1">
    <location>
        <begin position="216"/>
        <end position="219"/>
    </location>
    <ligand>
        <name>S-adenosyl-L-methionine</name>
        <dbReference type="ChEBI" id="CHEBI:59789"/>
    </ligand>
</feature>
<feature type="binding site" evidence="1">
    <location>
        <position position="235"/>
    </location>
    <ligand>
        <name>S-adenosyl-L-methionine</name>
        <dbReference type="ChEBI" id="CHEBI:59789"/>
    </ligand>
</feature>
<feature type="binding site" evidence="1">
    <location>
        <position position="255"/>
    </location>
    <ligand>
        <name>S-adenosyl-L-methionine</name>
        <dbReference type="ChEBI" id="CHEBI:59789"/>
    </ligand>
</feature>
<feature type="binding site" evidence="1">
    <location>
        <position position="271"/>
    </location>
    <ligand>
        <name>S-adenosyl-L-methionine</name>
        <dbReference type="ChEBI" id="CHEBI:59789"/>
    </ligand>
</feature>
<comment type="function">
    <text evidence="1">Catalyzes the 2'-O-methylation at nucleotide C2498 in 23S rRNA.</text>
</comment>
<comment type="catalytic activity">
    <reaction evidence="1">
        <text>cytidine(2498) in 23S rRNA + S-adenosyl-L-methionine = 2'-O-methylcytidine(2498) in 23S rRNA + S-adenosyl-L-homocysteine + H(+)</text>
        <dbReference type="Rhea" id="RHEA:42788"/>
        <dbReference type="Rhea" id="RHEA-COMP:10244"/>
        <dbReference type="Rhea" id="RHEA-COMP:10245"/>
        <dbReference type="ChEBI" id="CHEBI:15378"/>
        <dbReference type="ChEBI" id="CHEBI:57856"/>
        <dbReference type="ChEBI" id="CHEBI:59789"/>
        <dbReference type="ChEBI" id="CHEBI:74495"/>
        <dbReference type="ChEBI" id="CHEBI:82748"/>
        <dbReference type="EC" id="2.1.1.186"/>
    </reaction>
</comment>
<comment type="subunit">
    <text evidence="1">Monomer.</text>
</comment>
<comment type="subcellular location">
    <subcellularLocation>
        <location evidence="1">Cytoplasm</location>
    </subcellularLocation>
</comment>
<comment type="similarity">
    <text evidence="1">Belongs to the class I-like SAM-binding methyltransferase superfamily. RNA methyltransferase RlmE family. RlmM subfamily.</text>
</comment>
<evidence type="ECO:0000255" key="1">
    <source>
        <dbReference type="HAMAP-Rule" id="MF_01551"/>
    </source>
</evidence>
<reference key="1">
    <citation type="journal article" date="2005" name="J. Bacteriol.">
        <title>Whole-genome sequence analysis of Pseudomonas syringae pv. phaseolicola 1448A reveals divergence among pathovars in genes involved in virulence and transposition.</title>
        <authorList>
            <person name="Joardar V."/>
            <person name="Lindeberg M."/>
            <person name="Jackson R.W."/>
            <person name="Selengut J."/>
            <person name="Dodson R."/>
            <person name="Brinkac L.M."/>
            <person name="Daugherty S.C."/>
            <person name="DeBoy R.T."/>
            <person name="Durkin A.S."/>
            <person name="Gwinn Giglio M."/>
            <person name="Madupu R."/>
            <person name="Nelson W.C."/>
            <person name="Rosovitz M.J."/>
            <person name="Sullivan S.A."/>
            <person name="Crabtree J."/>
            <person name="Creasy T."/>
            <person name="Davidsen T.M."/>
            <person name="Haft D.H."/>
            <person name="Zafar N."/>
            <person name="Zhou L."/>
            <person name="Halpin R."/>
            <person name="Holley T."/>
            <person name="Khouri H.M."/>
            <person name="Feldblyum T.V."/>
            <person name="White O."/>
            <person name="Fraser C.M."/>
            <person name="Chatterjee A.K."/>
            <person name="Cartinhour S."/>
            <person name="Schneider D."/>
            <person name="Mansfield J.W."/>
            <person name="Collmer A."/>
            <person name="Buell R."/>
        </authorList>
    </citation>
    <scope>NUCLEOTIDE SEQUENCE [LARGE SCALE GENOMIC DNA]</scope>
    <source>
        <strain>1448A / Race 6</strain>
    </source>
</reference>
<organism>
    <name type="scientific">Pseudomonas savastanoi pv. phaseolicola (strain 1448A / Race 6)</name>
    <name type="common">Pseudomonas syringae pv. phaseolicola (strain 1448A / Race 6)</name>
    <dbReference type="NCBI Taxonomy" id="264730"/>
    <lineage>
        <taxon>Bacteria</taxon>
        <taxon>Pseudomonadati</taxon>
        <taxon>Pseudomonadota</taxon>
        <taxon>Gammaproteobacteria</taxon>
        <taxon>Pseudomonadales</taxon>
        <taxon>Pseudomonadaceae</taxon>
        <taxon>Pseudomonas</taxon>
    </lineage>
</organism>
<proteinExistence type="inferred from homology"/>